<feature type="chain" id="PRO_1000080382" description="Small ribosomal subunit protein uS12">
    <location>
        <begin position="1"/>
        <end position="123"/>
    </location>
</feature>
<feature type="modified residue" description="3-methylthioaspartic acid" evidence="1">
    <location>
        <position position="89"/>
    </location>
</feature>
<accession>A9IW34</accession>
<comment type="function">
    <text evidence="2">With S4 and S5 plays an important role in translational accuracy.</text>
</comment>
<comment type="function">
    <text evidence="2">Interacts with and stabilizes bases of the 16S rRNA that are involved in tRNA selection in the A site and with the mRNA backbone. Located at the interface of the 30S and 50S subunits, it traverses the body of the 30S subunit contacting proteins on the other side and probably holding the rRNA structure together. The combined cluster of proteins S8, S12 and S17 appears to hold together the shoulder and platform of the 30S subunit.</text>
</comment>
<comment type="subunit">
    <text evidence="2">Part of the 30S ribosomal subunit. Contacts proteins S8 and S17. May interact with IF1 in the 30S initiation complex.</text>
</comment>
<comment type="similarity">
    <text evidence="2">Belongs to the universal ribosomal protein uS12 family.</text>
</comment>
<name>RS12_BART1</name>
<organism>
    <name type="scientific">Bartonella tribocorum (strain CIP 105476 / IBS 506)</name>
    <dbReference type="NCBI Taxonomy" id="382640"/>
    <lineage>
        <taxon>Bacteria</taxon>
        <taxon>Pseudomonadati</taxon>
        <taxon>Pseudomonadota</taxon>
        <taxon>Alphaproteobacteria</taxon>
        <taxon>Hyphomicrobiales</taxon>
        <taxon>Bartonellaceae</taxon>
        <taxon>Bartonella</taxon>
    </lineage>
</organism>
<proteinExistence type="inferred from homology"/>
<evidence type="ECO:0000250" key="1"/>
<evidence type="ECO:0000255" key="2">
    <source>
        <dbReference type="HAMAP-Rule" id="MF_00403"/>
    </source>
</evidence>
<evidence type="ECO:0000305" key="3"/>
<sequence>MPTVNQLIRKPRVAPVKRNKVPALQSNPQKRGVCTRVYTTTPKKPNSALRKVAKIRLTNGFEVIGYIPGEGHNLQEHSVVMIRGGRVKDLPGVRYHIIRGLLDTQGVKNRKQRRSKYGAKRPK</sequence>
<gene>
    <name evidence="2" type="primary">rpsL</name>
    <name type="ordered locus">BT_1523</name>
</gene>
<reference key="1">
    <citation type="journal article" date="2007" name="Nat. Genet.">
        <title>Genomic analysis of Bartonella identifies type IV secretion systems as host adaptability factors.</title>
        <authorList>
            <person name="Saenz H.L."/>
            <person name="Engel P."/>
            <person name="Stoeckli M.C."/>
            <person name="Lanz C."/>
            <person name="Raddatz G."/>
            <person name="Vayssier-Taussat M."/>
            <person name="Birtles R."/>
            <person name="Schuster S.C."/>
            <person name="Dehio C."/>
        </authorList>
    </citation>
    <scope>NUCLEOTIDE SEQUENCE [LARGE SCALE GENOMIC DNA]</scope>
    <source>
        <strain>CIP 105476 / IBS 506</strain>
    </source>
</reference>
<keyword id="KW-0488">Methylation</keyword>
<keyword id="KW-0687">Ribonucleoprotein</keyword>
<keyword id="KW-0689">Ribosomal protein</keyword>
<keyword id="KW-0694">RNA-binding</keyword>
<keyword id="KW-0699">rRNA-binding</keyword>
<keyword id="KW-0820">tRNA-binding</keyword>
<dbReference type="EMBL" id="AM260525">
    <property type="protein sequence ID" value="CAK01869.1"/>
    <property type="molecule type" value="Genomic_DNA"/>
</dbReference>
<dbReference type="RefSeq" id="WP_005773262.1">
    <property type="nucleotide sequence ID" value="NC_010161.1"/>
</dbReference>
<dbReference type="SMR" id="A9IW34"/>
<dbReference type="KEGG" id="btr:BT_1523"/>
<dbReference type="eggNOG" id="COG0048">
    <property type="taxonomic scope" value="Bacteria"/>
</dbReference>
<dbReference type="HOGENOM" id="CLU_104295_1_2_5"/>
<dbReference type="Proteomes" id="UP000001592">
    <property type="component" value="Chromosome"/>
</dbReference>
<dbReference type="GO" id="GO:0015935">
    <property type="term" value="C:small ribosomal subunit"/>
    <property type="evidence" value="ECO:0007669"/>
    <property type="project" value="InterPro"/>
</dbReference>
<dbReference type="GO" id="GO:0019843">
    <property type="term" value="F:rRNA binding"/>
    <property type="evidence" value="ECO:0007669"/>
    <property type="project" value="UniProtKB-UniRule"/>
</dbReference>
<dbReference type="GO" id="GO:0003735">
    <property type="term" value="F:structural constituent of ribosome"/>
    <property type="evidence" value="ECO:0007669"/>
    <property type="project" value="InterPro"/>
</dbReference>
<dbReference type="GO" id="GO:0000049">
    <property type="term" value="F:tRNA binding"/>
    <property type="evidence" value="ECO:0007669"/>
    <property type="project" value="UniProtKB-UniRule"/>
</dbReference>
<dbReference type="GO" id="GO:0006412">
    <property type="term" value="P:translation"/>
    <property type="evidence" value="ECO:0007669"/>
    <property type="project" value="UniProtKB-UniRule"/>
</dbReference>
<dbReference type="CDD" id="cd03368">
    <property type="entry name" value="Ribosomal_S12"/>
    <property type="match status" value="1"/>
</dbReference>
<dbReference type="FunFam" id="2.40.50.140:FF:000001">
    <property type="entry name" value="30S ribosomal protein S12"/>
    <property type="match status" value="1"/>
</dbReference>
<dbReference type="Gene3D" id="2.40.50.140">
    <property type="entry name" value="Nucleic acid-binding proteins"/>
    <property type="match status" value="1"/>
</dbReference>
<dbReference type="HAMAP" id="MF_00403_B">
    <property type="entry name" value="Ribosomal_uS12_B"/>
    <property type="match status" value="1"/>
</dbReference>
<dbReference type="InterPro" id="IPR012340">
    <property type="entry name" value="NA-bd_OB-fold"/>
</dbReference>
<dbReference type="InterPro" id="IPR006032">
    <property type="entry name" value="Ribosomal_uS12"/>
</dbReference>
<dbReference type="InterPro" id="IPR005679">
    <property type="entry name" value="Ribosomal_uS12_bac"/>
</dbReference>
<dbReference type="NCBIfam" id="TIGR00981">
    <property type="entry name" value="rpsL_bact"/>
    <property type="match status" value="1"/>
</dbReference>
<dbReference type="PANTHER" id="PTHR11652">
    <property type="entry name" value="30S RIBOSOMAL PROTEIN S12 FAMILY MEMBER"/>
    <property type="match status" value="1"/>
</dbReference>
<dbReference type="Pfam" id="PF00164">
    <property type="entry name" value="Ribosom_S12_S23"/>
    <property type="match status" value="1"/>
</dbReference>
<dbReference type="PIRSF" id="PIRSF002133">
    <property type="entry name" value="Ribosomal_S12/S23"/>
    <property type="match status" value="1"/>
</dbReference>
<dbReference type="PRINTS" id="PR01034">
    <property type="entry name" value="RIBOSOMALS12"/>
</dbReference>
<dbReference type="SUPFAM" id="SSF50249">
    <property type="entry name" value="Nucleic acid-binding proteins"/>
    <property type="match status" value="1"/>
</dbReference>
<dbReference type="PROSITE" id="PS00055">
    <property type="entry name" value="RIBOSOMAL_S12"/>
    <property type="match status" value="1"/>
</dbReference>
<protein>
    <recommendedName>
        <fullName evidence="2">Small ribosomal subunit protein uS12</fullName>
    </recommendedName>
    <alternativeName>
        <fullName evidence="3">30S ribosomal protein S12</fullName>
    </alternativeName>
</protein>